<feature type="chain" id="PRO_0000289459" description="Lipoprotein signal peptidase">
    <location>
        <begin position="1"/>
        <end position="167"/>
    </location>
</feature>
<feature type="transmembrane region" description="Helical" evidence="1">
    <location>
        <begin position="10"/>
        <end position="30"/>
    </location>
</feature>
<feature type="transmembrane region" description="Helical" evidence="1">
    <location>
        <begin position="68"/>
        <end position="88"/>
    </location>
</feature>
<feature type="transmembrane region" description="Helical" evidence="1">
    <location>
        <begin position="98"/>
        <end position="118"/>
    </location>
</feature>
<feature type="transmembrane region" description="Helical" evidence="1">
    <location>
        <begin position="138"/>
        <end position="158"/>
    </location>
</feature>
<feature type="active site" evidence="1">
    <location>
        <position position="124"/>
    </location>
</feature>
<feature type="active site" evidence="1">
    <location>
        <position position="142"/>
    </location>
</feature>
<evidence type="ECO:0000255" key="1">
    <source>
        <dbReference type="HAMAP-Rule" id="MF_00161"/>
    </source>
</evidence>
<proteinExistence type="inferred from homology"/>
<keyword id="KW-0064">Aspartyl protease</keyword>
<keyword id="KW-0997">Cell inner membrane</keyword>
<keyword id="KW-1003">Cell membrane</keyword>
<keyword id="KW-0378">Hydrolase</keyword>
<keyword id="KW-0472">Membrane</keyword>
<keyword id="KW-0645">Protease</keyword>
<keyword id="KW-1185">Reference proteome</keyword>
<keyword id="KW-0812">Transmembrane</keyword>
<keyword id="KW-1133">Transmembrane helix</keyword>
<protein>
    <recommendedName>
        <fullName evidence="1">Lipoprotein signal peptidase</fullName>
        <ecNumber evidence="1">3.4.23.36</ecNumber>
    </recommendedName>
    <alternativeName>
        <fullName evidence="1">Prolipoprotein signal peptidase</fullName>
    </alternativeName>
    <alternativeName>
        <fullName evidence="1">Signal peptidase II</fullName>
        <shortName evidence="1">SPase II</shortName>
    </alternativeName>
</protein>
<sequence length="167" mass="18363">MSQRPNPSALIWLLLSAVVIGLDQWSKAWVLSSLPEYTPVPVIDGFWNWYRTYNTGAAFSFLSDAGGWQLWFFTALAVGISGLLAFWLSRTARGDWRSAVPYALVIGGAIGNVIDRLMHGHVVDFIQWYVGEHTWPSFNIADSAIVGGAIGIALFGLFDGKRSRKAG</sequence>
<gene>
    <name evidence="1" type="primary">lspA</name>
    <name type="ordered locus">XCC1156</name>
</gene>
<name>LSPA_XANCP</name>
<organism>
    <name type="scientific">Xanthomonas campestris pv. campestris (strain ATCC 33913 / DSM 3586 / NCPPB 528 / LMG 568 / P 25)</name>
    <dbReference type="NCBI Taxonomy" id="190485"/>
    <lineage>
        <taxon>Bacteria</taxon>
        <taxon>Pseudomonadati</taxon>
        <taxon>Pseudomonadota</taxon>
        <taxon>Gammaproteobacteria</taxon>
        <taxon>Lysobacterales</taxon>
        <taxon>Lysobacteraceae</taxon>
        <taxon>Xanthomonas</taxon>
    </lineage>
</organism>
<dbReference type="EC" id="3.4.23.36" evidence="1"/>
<dbReference type="EMBL" id="AE008922">
    <property type="protein sequence ID" value="AAM40455.1"/>
    <property type="molecule type" value="Genomic_DNA"/>
</dbReference>
<dbReference type="RefSeq" id="NP_636531.1">
    <property type="nucleotide sequence ID" value="NC_003902.1"/>
</dbReference>
<dbReference type="RefSeq" id="WP_011036354.1">
    <property type="nucleotide sequence ID" value="NC_003902.1"/>
</dbReference>
<dbReference type="SMR" id="Q8PBG5"/>
<dbReference type="STRING" id="190485.XCC1156"/>
<dbReference type="EnsemblBacteria" id="AAM40455">
    <property type="protein sequence ID" value="AAM40455"/>
    <property type="gene ID" value="XCC1156"/>
</dbReference>
<dbReference type="GeneID" id="58014259"/>
<dbReference type="KEGG" id="xcc:XCC1156"/>
<dbReference type="PATRIC" id="fig|190485.4.peg.1237"/>
<dbReference type="eggNOG" id="COG0597">
    <property type="taxonomic scope" value="Bacteria"/>
</dbReference>
<dbReference type="HOGENOM" id="CLU_083252_4_0_6"/>
<dbReference type="OrthoDB" id="9810259at2"/>
<dbReference type="UniPathway" id="UPA00665"/>
<dbReference type="Proteomes" id="UP000001010">
    <property type="component" value="Chromosome"/>
</dbReference>
<dbReference type="GO" id="GO:0005886">
    <property type="term" value="C:plasma membrane"/>
    <property type="evidence" value="ECO:0000318"/>
    <property type="project" value="GO_Central"/>
</dbReference>
<dbReference type="GO" id="GO:0004190">
    <property type="term" value="F:aspartic-type endopeptidase activity"/>
    <property type="evidence" value="ECO:0007669"/>
    <property type="project" value="UniProtKB-UniRule"/>
</dbReference>
<dbReference type="GO" id="GO:0004175">
    <property type="term" value="F:endopeptidase activity"/>
    <property type="evidence" value="ECO:0000318"/>
    <property type="project" value="GO_Central"/>
</dbReference>
<dbReference type="GO" id="GO:0006508">
    <property type="term" value="P:proteolysis"/>
    <property type="evidence" value="ECO:0007669"/>
    <property type="project" value="UniProtKB-KW"/>
</dbReference>
<dbReference type="HAMAP" id="MF_00161">
    <property type="entry name" value="LspA"/>
    <property type="match status" value="1"/>
</dbReference>
<dbReference type="InterPro" id="IPR001872">
    <property type="entry name" value="Peptidase_A8"/>
</dbReference>
<dbReference type="NCBIfam" id="TIGR00077">
    <property type="entry name" value="lspA"/>
    <property type="match status" value="1"/>
</dbReference>
<dbReference type="PANTHER" id="PTHR33695">
    <property type="entry name" value="LIPOPROTEIN SIGNAL PEPTIDASE"/>
    <property type="match status" value="1"/>
</dbReference>
<dbReference type="PANTHER" id="PTHR33695:SF1">
    <property type="entry name" value="LIPOPROTEIN SIGNAL PEPTIDASE"/>
    <property type="match status" value="1"/>
</dbReference>
<dbReference type="Pfam" id="PF01252">
    <property type="entry name" value="Peptidase_A8"/>
    <property type="match status" value="1"/>
</dbReference>
<dbReference type="PRINTS" id="PR00781">
    <property type="entry name" value="LIPOSIGPTASE"/>
</dbReference>
<dbReference type="PROSITE" id="PS00855">
    <property type="entry name" value="SPASE_II"/>
    <property type="match status" value="1"/>
</dbReference>
<reference key="1">
    <citation type="journal article" date="2002" name="Nature">
        <title>Comparison of the genomes of two Xanthomonas pathogens with differing host specificities.</title>
        <authorList>
            <person name="da Silva A.C.R."/>
            <person name="Ferro J.A."/>
            <person name="Reinach F.C."/>
            <person name="Farah C.S."/>
            <person name="Furlan L.R."/>
            <person name="Quaggio R.B."/>
            <person name="Monteiro-Vitorello C.B."/>
            <person name="Van Sluys M.A."/>
            <person name="Almeida N.F. Jr."/>
            <person name="Alves L.M.C."/>
            <person name="do Amaral A.M."/>
            <person name="Bertolini M.C."/>
            <person name="Camargo L.E.A."/>
            <person name="Camarotte G."/>
            <person name="Cannavan F."/>
            <person name="Cardozo J."/>
            <person name="Chambergo F."/>
            <person name="Ciapina L.P."/>
            <person name="Cicarelli R.M.B."/>
            <person name="Coutinho L.L."/>
            <person name="Cursino-Santos J.R."/>
            <person name="El-Dorry H."/>
            <person name="Faria J.B."/>
            <person name="Ferreira A.J.S."/>
            <person name="Ferreira R.C.C."/>
            <person name="Ferro M.I.T."/>
            <person name="Formighieri E.F."/>
            <person name="Franco M.C."/>
            <person name="Greggio C.C."/>
            <person name="Gruber A."/>
            <person name="Katsuyama A.M."/>
            <person name="Kishi L.T."/>
            <person name="Leite R.P."/>
            <person name="Lemos E.G.M."/>
            <person name="Lemos M.V.F."/>
            <person name="Locali E.C."/>
            <person name="Machado M.A."/>
            <person name="Madeira A.M.B.N."/>
            <person name="Martinez-Rossi N.M."/>
            <person name="Martins E.C."/>
            <person name="Meidanis J."/>
            <person name="Menck C.F.M."/>
            <person name="Miyaki C.Y."/>
            <person name="Moon D.H."/>
            <person name="Moreira L.M."/>
            <person name="Novo M.T.M."/>
            <person name="Okura V.K."/>
            <person name="Oliveira M.C."/>
            <person name="Oliveira V.R."/>
            <person name="Pereira H.A."/>
            <person name="Rossi A."/>
            <person name="Sena J.A.D."/>
            <person name="Silva C."/>
            <person name="de Souza R.F."/>
            <person name="Spinola L.A.F."/>
            <person name="Takita M.A."/>
            <person name="Tamura R.E."/>
            <person name="Teixeira E.C."/>
            <person name="Tezza R.I.D."/>
            <person name="Trindade dos Santos M."/>
            <person name="Truffi D."/>
            <person name="Tsai S.M."/>
            <person name="White F.F."/>
            <person name="Setubal J.C."/>
            <person name="Kitajima J.P."/>
        </authorList>
    </citation>
    <scope>NUCLEOTIDE SEQUENCE [LARGE SCALE GENOMIC DNA]</scope>
    <source>
        <strain>ATCC 33913 / DSM 3586 / NCPPB 528 / LMG 568 / P 25</strain>
    </source>
</reference>
<accession>Q8PBG5</accession>
<comment type="function">
    <text evidence="1">This protein specifically catalyzes the removal of signal peptides from prolipoproteins.</text>
</comment>
<comment type="catalytic activity">
    <reaction evidence="1">
        <text>Release of signal peptides from bacterial membrane prolipoproteins. Hydrolyzes -Xaa-Yaa-Zaa-|-(S,diacylglyceryl)Cys-, in which Xaa is hydrophobic (preferably Leu), and Yaa (Ala or Ser) and Zaa (Gly or Ala) have small, neutral side chains.</text>
        <dbReference type="EC" id="3.4.23.36"/>
    </reaction>
</comment>
<comment type="pathway">
    <text evidence="1">Protein modification; lipoprotein biosynthesis (signal peptide cleavage).</text>
</comment>
<comment type="subcellular location">
    <subcellularLocation>
        <location evidence="1">Cell inner membrane</location>
        <topology evidence="1">Multi-pass membrane protein</topology>
    </subcellularLocation>
</comment>
<comment type="similarity">
    <text evidence="1">Belongs to the peptidase A8 family.</text>
</comment>